<protein>
    <recommendedName>
        <fullName evidence="3">Protein COP1 SUPPRESSOR 2</fullName>
    </recommendedName>
</protein>
<evidence type="ECO:0000256" key="1">
    <source>
        <dbReference type="SAM" id="MobiDB-lite"/>
    </source>
</evidence>
<evidence type="ECO:0000269" key="2">
    <source>
    </source>
</evidence>
<evidence type="ECO:0000303" key="3">
    <source>
    </source>
</evidence>
<evidence type="ECO:0000305" key="4"/>
<evidence type="ECO:0000305" key="5">
    <source>
    </source>
</evidence>
<evidence type="ECO:0000312" key="6">
    <source>
        <dbReference type="Araport" id="AT1G02330"/>
    </source>
</evidence>
<evidence type="ECO:0000312" key="7">
    <source>
        <dbReference type="EMBL" id="AEE27416.1"/>
    </source>
</evidence>
<keyword id="KW-0175">Coiled coil</keyword>
<keyword id="KW-0539">Nucleus</keyword>
<keyword id="KW-1185">Reference proteome</keyword>
<dbReference type="EMBL" id="AC064879">
    <property type="protein sequence ID" value="AAG00884.1"/>
    <property type="status" value="ALT_SEQ"/>
    <property type="molecule type" value="Genomic_DNA"/>
</dbReference>
<dbReference type="EMBL" id="CP002684">
    <property type="protein sequence ID" value="AEE27416.1"/>
    <property type="molecule type" value="Genomic_DNA"/>
</dbReference>
<dbReference type="EMBL" id="AF372932">
    <property type="protein sequence ID" value="AAK50072.1"/>
    <property type="molecule type" value="mRNA"/>
</dbReference>
<dbReference type="EMBL" id="AY133621">
    <property type="protein sequence ID" value="AAM91451.1"/>
    <property type="molecule type" value="mRNA"/>
</dbReference>
<dbReference type="PIR" id="E86153">
    <property type="entry name" value="E86153"/>
</dbReference>
<dbReference type="RefSeq" id="NP_563649.1">
    <property type="nucleotide sequence ID" value="NM_100114.5"/>
</dbReference>
<dbReference type="SMR" id="F4HVZ5"/>
<dbReference type="FunCoup" id="F4HVZ5">
    <property type="interactions" value="3437"/>
</dbReference>
<dbReference type="STRING" id="3702.F4HVZ5"/>
<dbReference type="iPTMnet" id="F4HVZ5"/>
<dbReference type="PaxDb" id="3702-AT1G02330.1"/>
<dbReference type="ProteomicsDB" id="222696"/>
<dbReference type="EnsemblPlants" id="AT1G02330.1">
    <property type="protein sequence ID" value="AT1G02330.1"/>
    <property type="gene ID" value="AT1G02330"/>
</dbReference>
<dbReference type="GeneID" id="839367"/>
<dbReference type="Gramene" id="AT1G02330.1">
    <property type="protein sequence ID" value="AT1G02330.1"/>
    <property type="gene ID" value="AT1G02330"/>
</dbReference>
<dbReference type="KEGG" id="ath:AT1G02330"/>
<dbReference type="Araport" id="AT1G02330"/>
<dbReference type="TAIR" id="AT1G02330">
    <property type="gene designation" value="CSU2"/>
</dbReference>
<dbReference type="eggNOG" id="KOG3345">
    <property type="taxonomic scope" value="Eukaryota"/>
</dbReference>
<dbReference type="HOGENOM" id="CLU_068345_0_0_1"/>
<dbReference type="InParanoid" id="F4HVZ5"/>
<dbReference type="OMA" id="NIKTGGM"/>
<dbReference type="OrthoDB" id="5627at2759"/>
<dbReference type="CD-CODE" id="9A8A194B">
    <property type="entry name" value="Nuclear speckle"/>
</dbReference>
<dbReference type="PRO" id="PR:F4HVZ5"/>
<dbReference type="Proteomes" id="UP000006548">
    <property type="component" value="Chromosome 1"/>
</dbReference>
<dbReference type="ExpressionAtlas" id="F4HVZ5">
    <property type="expression patterns" value="baseline and differential"/>
</dbReference>
<dbReference type="GO" id="GO:0016607">
    <property type="term" value="C:nuclear speck"/>
    <property type="evidence" value="ECO:0000314"/>
    <property type="project" value="TAIR"/>
</dbReference>
<dbReference type="GO" id="GO:1904667">
    <property type="term" value="P:negative regulation of ubiquitin protein ligase activity"/>
    <property type="evidence" value="ECO:0000314"/>
    <property type="project" value="TAIR"/>
</dbReference>
<dbReference type="GO" id="GO:0080022">
    <property type="term" value="P:primary root development"/>
    <property type="evidence" value="ECO:0000315"/>
    <property type="project" value="TAIR"/>
</dbReference>
<dbReference type="GO" id="GO:0010099">
    <property type="term" value="P:regulation of photomorphogenesis"/>
    <property type="evidence" value="ECO:0000316"/>
    <property type="project" value="TAIR"/>
</dbReference>
<dbReference type="GO" id="GO:0055121">
    <property type="term" value="P:response to high fluence blue light stimulus by blue high-fluence system"/>
    <property type="evidence" value="ECO:0000315"/>
    <property type="project" value="TAIR"/>
</dbReference>
<dbReference type="InterPro" id="IPR010756">
    <property type="entry name" value="Tls1-like"/>
</dbReference>
<dbReference type="PANTHER" id="PTHR13486:SF2">
    <property type="entry name" value="SPLICING FACTOR C9ORF78"/>
    <property type="match status" value="1"/>
</dbReference>
<dbReference type="PANTHER" id="PTHR13486">
    <property type="entry name" value="TELOMERE LENGTH AND SILENCING PROTEIN 1 TLS1 FAMILY MEMBER"/>
    <property type="match status" value="1"/>
</dbReference>
<dbReference type="Pfam" id="PF07052">
    <property type="entry name" value="Hep_59"/>
    <property type="match status" value="1"/>
</dbReference>
<organism>
    <name type="scientific">Arabidopsis thaliana</name>
    <name type="common">Mouse-ear cress</name>
    <dbReference type="NCBI Taxonomy" id="3702"/>
    <lineage>
        <taxon>Eukaryota</taxon>
        <taxon>Viridiplantae</taxon>
        <taxon>Streptophyta</taxon>
        <taxon>Embryophyta</taxon>
        <taxon>Tracheophyta</taxon>
        <taxon>Spermatophyta</taxon>
        <taxon>Magnoliopsida</taxon>
        <taxon>eudicotyledons</taxon>
        <taxon>Gunneridae</taxon>
        <taxon>Pentapetalae</taxon>
        <taxon>rosids</taxon>
        <taxon>malvids</taxon>
        <taxon>Brassicales</taxon>
        <taxon>Brassicaceae</taxon>
        <taxon>Camelineae</taxon>
        <taxon>Arabidopsis</taxon>
    </lineage>
</organism>
<reference key="1">
    <citation type="journal article" date="2000" name="Nature">
        <title>Sequence and analysis of chromosome 1 of the plant Arabidopsis thaliana.</title>
        <authorList>
            <person name="Theologis A."/>
            <person name="Ecker J.R."/>
            <person name="Palm C.J."/>
            <person name="Federspiel N.A."/>
            <person name="Kaul S."/>
            <person name="White O."/>
            <person name="Alonso J."/>
            <person name="Altafi H."/>
            <person name="Araujo R."/>
            <person name="Bowman C.L."/>
            <person name="Brooks S.Y."/>
            <person name="Buehler E."/>
            <person name="Chan A."/>
            <person name="Chao Q."/>
            <person name="Chen H."/>
            <person name="Cheuk R.F."/>
            <person name="Chin C.W."/>
            <person name="Chung M.K."/>
            <person name="Conn L."/>
            <person name="Conway A.B."/>
            <person name="Conway A.R."/>
            <person name="Creasy T.H."/>
            <person name="Dewar K."/>
            <person name="Dunn P."/>
            <person name="Etgu P."/>
            <person name="Feldblyum T.V."/>
            <person name="Feng J.-D."/>
            <person name="Fong B."/>
            <person name="Fujii C.Y."/>
            <person name="Gill J.E."/>
            <person name="Goldsmith A.D."/>
            <person name="Haas B."/>
            <person name="Hansen N.F."/>
            <person name="Hughes B."/>
            <person name="Huizar L."/>
            <person name="Hunter J.L."/>
            <person name="Jenkins J."/>
            <person name="Johnson-Hopson C."/>
            <person name="Khan S."/>
            <person name="Khaykin E."/>
            <person name="Kim C.J."/>
            <person name="Koo H.L."/>
            <person name="Kremenetskaia I."/>
            <person name="Kurtz D.B."/>
            <person name="Kwan A."/>
            <person name="Lam B."/>
            <person name="Langin-Hooper S."/>
            <person name="Lee A."/>
            <person name="Lee J.M."/>
            <person name="Lenz C.A."/>
            <person name="Li J.H."/>
            <person name="Li Y.-P."/>
            <person name="Lin X."/>
            <person name="Liu S.X."/>
            <person name="Liu Z.A."/>
            <person name="Luros J.S."/>
            <person name="Maiti R."/>
            <person name="Marziali A."/>
            <person name="Militscher J."/>
            <person name="Miranda M."/>
            <person name="Nguyen M."/>
            <person name="Nierman W.C."/>
            <person name="Osborne B.I."/>
            <person name="Pai G."/>
            <person name="Peterson J."/>
            <person name="Pham P.K."/>
            <person name="Rizzo M."/>
            <person name="Rooney T."/>
            <person name="Rowley D."/>
            <person name="Sakano H."/>
            <person name="Salzberg S.L."/>
            <person name="Schwartz J.R."/>
            <person name="Shinn P."/>
            <person name="Southwick A.M."/>
            <person name="Sun H."/>
            <person name="Tallon L.J."/>
            <person name="Tambunga G."/>
            <person name="Toriumi M.J."/>
            <person name="Town C.D."/>
            <person name="Utterback T."/>
            <person name="Van Aken S."/>
            <person name="Vaysberg M."/>
            <person name="Vysotskaia V.S."/>
            <person name="Walker M."/>
            <person name="Wu D."/>
            <person name="Yu G."/>
            <person name="Fraser C.M."/>
            <person name="Venter J.C."/>
            <person name="Davis R.W."/>
        </authorList>
    </citation>
    <scope>NUCLEOTIDE SEQUENCE [LARGE SCALE GENOMIC DNA]</scope>
    <source>
        <strain>cv. Columbia</strain>
    </source>
</reference>
<reference key="2">
    <citation type="journal article" date="2017" name="Plant J.">
        <title>Araport11: a complete reannotation of the Arabidopsis thaliana reference genome.</title>
        <authorList>
            <person name="Cheng C.Y."/>
            <person name="Krishnakumar V."/>
            <person name="Chan A.P."/>
            <person name="Thibaud-Nissen F."/>
            <person name="Schobel S."/>
            <person name="Town C.D."/>
        </authorList>
    </citation>
    <scope>GENOME REANNOTATION</scope>
    <source>
        <strain>cv. Columbia</strain>
    </source>
</reference>
<reference key="3">
    <citation type="journal article" date="2003" name="Science">
        <title>Empirical analysis of transcriptional activity in the Arabidopsis genome.</title>
        <authorList>
            <person name="Yamada K."/>
            <person name="Lim J."/>
            <person name="Dale J.M."/>
            <person name="Chen H."/>
            <person name="Shinn P."/>
            <person name="Palm C.J."/>
            <person name="Southwick A.M."/>
            <person name="Wu H.C."/>
            <person name="Kim C.J."/>
            <person name="Nguyen M."/>
            <person name="Pham P.K."/>
            <person name="Cheuk R.F."/>
            <person name="Karlin-Newmann G."/>
            <person name="Liu S.X."/>
            <person name="Lam B."/>
            <person name="Sakano H."/>
            <person name="Wu T."/>
            <person name="Yu G."/>
            <person name="Miranda M."/>
            <person name="Quach H.L."/>
            <person name="Tripp M."/>
            <person name="Chang C.H."/>
            <person name="Lee J.M."/>
            <person name="Toriumi M.J."/>
            <person name="Chan M.M."/>
            <person name="Tang C.C."/>
            <person name="Onodera C.S."/>
            <person name="Deng J.M."/>
            <person name="Akiyama K."/>
            <person name="Ansari Y."/>
            <person name="Arakawa T."/>
            <person name="Banh J."/>
            <person name="Banno F."/>
            <person name="Bowser L."/>
            <person name="Brooks S.Y."/>
            <person name="Carninci P."/>
            <person name="Chao Q."/>
            <person name="Choy N."/>
            <person name="Enju A."/>
            <person name="Goldsmith A.D."/>
            <person name="Gurjal M."/>
            <person name="Hansen N.F."/>
            <person name="Hayashizaki Y."/>
            <person name="Johnson-Hopson C."/>
            <person name="Hsuan V.W."/>
            <person name="Iida K."/>
            <person name="Karnes M."/>
            <person name="Khan S."/>
            <person name="Koesema E."/>
            <person name="Ishida J."/>
            <person name="Jiang P.X."/>
            <person name="Jones T."/>
            <person name="Kawai J."/>
            <person name="Kamiya A."/>
            <person name="Meyers C."/>
            <person name="Nakajima M."/>
            <person name="Narusaka M."/>
            <person name="Seki M."/>
            <person name="Sakurai T."/>
            <person name="Satou M."/>
            <person name="Tamse R."/>
            <person name="Vaysberg M."/>
            <person name="Wallender E.K."/>
            <person name="Wong C."/>
            <person name="Yamamura Y."/>
            <person name="Yuan S."/>
            <person name="Shinozaki K."/>
            <person name="Davis R.W."/>
            <person name="Theologis A."/>
            <person name="Ecker J.R."/>
        </authorList>
    </citation>
    <scope>NUCLEOTIDE SEQUENCE [LARGE SCALE MRNA] OF 101-279</scope>
    <source>
        <strain>cv. Columbia</strain>
    </source>
</reference>
<reference key="4">
    <citation type="journal article" date="2015" name="PLoS Genet.">
        <title>Arabidopsis COP1 SUPPRESSOR 2 represses COP1 E3 ubiquitin ligase activity through their coiled-coil domains association.</title>
        <authorList>
            <person name="Xu D."/>
            <person name="Lin F."/>
            <person name="Jiang Y."/>
            <person name="Ling J."/>
            <person name="Hettiarachchi C."/>
            <person name="Tellgren-Roth C."/>
            <person name="Holm M."/>
            <person name="Wei N."/>
            <person name="Deng X.W."/>
        </authorList>
    </citation>
    <scope>FUNCTION</scope>
    <scope>INTERACTION WITH COP1</scope>
    <scope>SUBCELLULAR LOCATION</scope>
</reference>
<feature type="chain" id="PRO_0000441872" description="Protein COP1 SUPPRESSOR 2">
    <location>
        <begin position="1"/>
        <end position="279"/>
    </location>
</feature>
<feature type="region of interest" description="Disordered" evidence="1">
    <location>
        <begin position="1"/>
        <end position="29"/>
    </location>
</feature>
<feature type="region of interest" description="Disordered" evidence="1">
    <location>
        <begin position="57"/>
        <end position="79"/>
    </location>
</feature>
<feature type="region of interest" description="Disordered" evidence="1">
    <location>
        <begin position="217"/>
        <end position="279"/>
    </location>
</feature>
<feature type="coiled-coil region" evidence="5">
    <location>
        <begin position="86"/>
        <end position="183"/>
    </location>
</feature>
<feature type="compositionally biased region" description="Basic and acidic residues" evidence="1">
    <location>
        <begin position="68"/>
        <end position="79"/>
    </location>
</feature>
<feature type="compositionally biased region" description="Basic and acidic residues" evidence="1">
    <location>
        <begin position="217"/>
        <end position="229"/>
    </location>
</feature>
<feature type="compositionally biased region" description="Polar residues" evidence="1">
    <location>
        <begin position="250"/>
        <end position="260"/>
    </location>
</feature>
<feature type="compositionally biased region" description="Basic residues" evidence="1">
    <location>
        <begin position="270"/>
        <end position="279"/>
    </location>
</feature>
<proteinExistence type="evidence at protein level"/>
<sequence>MPPKRNFRKRSFEEEEEDNDVNKAAISEEEEKRRLALEEVKFLQKLRERKLGIPALSSTAQSSIGKVKPVEKTETEGEKEELVLQDTFAQETAVLIEDPNMVKYIEQELAKKRGRNIDDAEEVENELKRVEDELYKIPDHLKVKKRSSEESSTQWTTGIAEVQLPIEYKLKNIEETEAAKKLLQERRLMGRPKSEFSIPSSYSADYFQRGKDYAEKLRREHPELYKDRGGPQADGEAAKPSTSSSTNNNADSGKSRQAATDQIMLERFRKRERNRVMRR</sequence>
<comment type="function">
    <text evidence="2">Inhibits E3 ubiquitin-protein ligase activity of COP1, a central repressor of seedling photomorphogenesis. Represses COP1-mediated turnover of HY5 in the dark. Required for primary root development under normal light growth conditions.</text>
</comment>
<comment type="subunit">
    <text evidence="2">Interacts with COP1.</text>
</comment>
<comment type="subcellular location">
    <subcellularLocation>
        <location evidence="2">Nucleus</location>
    </subcellularLocation>
    <subcellularLocation>
        <location evidence="2">Nucleus speckle</location>
    </subcellularLocation>
    <text evidence="2">Is recruited to nuclear speckles by COP1.</text>
</comment>
<comment type="similarity">
    <text>Belongs to the TLS1 family.</text>
</comment>
<comment type="sequence caution" evidence="4">
    <conflict type="erroneous gene model prediction">
        <sequence resource="EMBL-CDS" id="AAG00884"/>
    </conflict>
</comment>
<name>CSU2_ARATH</name>
<accession>F4HVZ5</accession>
<accession>Q94JU5</accession>
<accession>Q9FZ28</accession>
<gene>
    <name evidence="3" type="primary">CSU2</name>
    <name evidence="6" type="ordered locus">At1g02330</name>
    <name evidence="7" type="ORF">T6A9.2</name>
</gene>